<feature type="chain" id="PRO_0000355073" description="Probable RNA-binding protein 46">
    <location>
        <begin position="1"/>
        <end position="533"/>
    </location>
</feature>
<feature type="domain" description="RRM 1" evidence="1">
    <location>
        <begin position="61"/>
        <end position="139"/>
    </location>
</feature>
<feature type="domain" description="RRM 2" evidence="1">
    <location>
        <begin position="141"/>
        <end position="223"/>
    </location>
</feature>
<feature type="domain" description="RRM 3" evidence="1">
    <location>
        <begin position="236"/>
        <end position="308"/>
    </location>
</feature>
<feature type="region of interest" description="Disordered" evidence="2">
    <location>
        <begin position="338"/>
        <end position="362"/>
    </location>
</feature>
<sequence length="533" mass="60077">MNEENTDGTNGCSKVRTGTQNEAALLALMEKTGYNMVQENGQRKFGGPPPGWEGPPPPRGCEVFVGKIPRDMYEDELVPVFERAGKIYEFRLMMEFSGENRGYAFVMYTTKEEAQLAIRILNNYEIRPGKFIGVCVSLDNCRLFIGAIPKEKKKEEILDEMKKVTEGVVDVIVYPSATDKTKNRGFAFVEYESHRAAAMARRKLIPGTFQLWGHTIQVDWADPEKEVDEETMQRVKVLYVRNLMISTTEETIKAEFSKFKPGAVERVKKLRDYAFVHFFHREDAVAAMSVMNGKCIDGASIEVTLAKPVNKENTWRQHLNGQISPNSENLLVYANKEESHSKSLGKPPTLPTRLNGQHSPSPPEIERCTYPFFPGTKLTPISMYSLKSNHFNSAVMHLDYYCNKNNWAPPEYYLYSTTSQDGKVLLVYKIVIPAIANGSQSYFMPDKLCTTLEDAKELAAQFTLLHLDFNFRRSSINSLSPVSTTLSSGTPSMLPYTSRPSSYPSYPLSPTISLANGSHVGQRLYISNQASFF</sequence>
<proteinExistence type="evidence at protein level"/>
<accession>P86049</accession>
<reference key="1">
    <citation type="journal article" date="2009" name="PLoS Biol.">
        <title>Lineage-specific biology revealed by a finished genome assembly of the mouse.</title>
        <authorList>
            <person name="Church D.M."/>
            <person name="Goodstadt L."/>
            <person name="Hillier L.W."/>
            <person name="Zody M.C."/>
            <person name="Goldstein S."/>
            <person name="She X."/>
            <person name="Bult C.J."/>
            <person name="Agarwala R."/>
            <person name="Cherry J.L."/>
            <person name="DiCuccio M."/>
            <person name="Hlavina W."/>
            <person name="Kapustin Y."/>
            <person name="Meric P."/>
            <person name="Maglott D."/>
            <person name="Birtle Z."/>
            <person name="Marques A.C."/>
            <person name="Graves T."/>
            <person name="Zhou S."/>
            <person name="Teague B."/>
            <person name="Potamousis K."/>
            <person name="Churas C."/>
            <person name="Place M."/>
            <person name="Herschleb J."/>
            <person name="Runnheim R."/>
            <person name="Forrest D."/>
            <person name="Amos-Landgraf J."/>
            <person name="Schwartz D.C."/>
            <person name="Cheng Z."/>
            <person name="Lindblad-Toh K."/>
            <person name="Eichler E.E."/>
            <person name="Ponting C.P."/>
        </authorList>
    </citation>
    <scope>NUCLEOTIDE SEQUENCE [LARGE SCALE GENOMIC DNA]</scope>
    <source>
        <strain>C57BL/6J</strain>
    </source>
</reference>
<reference key="2">
    <citation type="journal article" date="2010" name="Cell">
        <title>A tissue-specific atlas of mouse protein phosphorylation and expression.</title>
        <authorList>
            <person name="Huttlin E.L."/>
            <person name="Jedrychowski M.P."/>
            <person name="Elias J.E."/>
            <person name="Goswami T."/>
            <person name="Rad R."/>
            <person name="Beausoleil S.A."/>
            <person name="Villen J."/>
            <person name="Haas W."/>
            <person name="Sowa M.E."/>
            <person name="Gygi S.P."/>
        </authorList>
    </citation>
    <scope>IDENTIFICATION BY MASS SPECTROMETRY [LARGE SCALE ANALYSIS]</scope>
    <source>
        <tissue>Testis</tissue>
    </source>
</reference>
<reference key="3">
    <citation type="journal article" date="2022" name="PLoS Genet.">
        <title>The germ cell-specific RNA binding protein RBM46 is essential for spermatogonial differentiation in mice.</title>
        <authorList>
            <person name="Peart N.J."/>
            <person name="Johnson T.A."/>
            <person name="Lee S."/>
            <person name="Sears M.J."/>
            <person name="Yang F."/>
            <person name="Quesnel-Vallieres M."/>
            <person name="Feng H."/>
            <person name="Recinos Y."/>
            <person name="Barash Y."/>
            <person name="Zhang C."/>
            <person name="Hermann B.P."/>
            <person name="Wang P.J."/>
            <person name="Geyer C.B."/>
            <person name="Carstens R.P."/>
        </authorList>
    </citation>
    <scope>FUNCTION</scope>
    <scope>DISRUPTION PHENOTYPE</scope>
    <scope>SUBCELLULAR LOCATION</scope>
    <scope>TISSUE SPECIFICITY</scope>
</reference>
<reference key="4">
    <citation type="journal article" date="2022" name="Sci. Adv.">
        <title>RNA binding protein RBM46 regulates mitotic-to-meiotic transition in spermatogenesis.</title>
        <authorList>
            <person name="Qian B."/>
            <person name="Li Y."/>
            <person name="Yan R."/>
            <person name="Han S."/>
            <person name="Bu Z."/>
            <person name="Gong J."/>
            <person name="Zheng B."/>
            <person name="Yuan Z."/>
            <person name="Ren S."/>
            <person name="He Q."/>
            <person name="Zhang J."/>
            <person name="Xu C."/>
            <person name="Wang R."/>
            <person name="Sun Z."/>
            <person name="Lin M."/>
            <person name="Zhou J."/>
            <person name="Ye L."/>
        </authorList>
    </citation>
    <scope>FUNCTION</scope>
    <scope>DISRUPTION PHENOTYPE</scope>
    <scope>SUBCELLULAR LOCATION</scope>
    <scope>TISSUE SPECIFICITY</scope>
    <scope>INTERACTION WITH YTHDC2; MEIOC; MOV10; CNOT6L; DDX4; UPF1 AND PABPC1</scope>
</reference>
<reference key="5">
    <citation type="journal article" date="2023" name="Protein Cell">
        <title>RBM46 is essential for gametogenesis and functions in post-transcriptional roles affecting meiotic cohesin subunits.</title>
        <authorList>
            <person name="Lv Y."/>
            <person name="Lu G."/>
            <person name="Cai Y."/>
            <person name="Su R."/>
            <person name="Liang L."/>
            <person name="Wang X."/>
            <person name="Mu W."/>
            <person name="He X."/>
            <person name="Huang T."/>
            <person name="Ma J."/>
            <person name="Zhao Y."/>
            <person name="Chen Z.J."/>
            <person name="Xue Y."/>
            <person name="Liu H."/>
            <person name="Chan W.Y."/>
        </authorList>
    </citation>
    <scope>FUNCTION</scope>
    <scope>DISRUPTION PHENOTYPE</scope>
    <scope>SUBCELLULAR LOCATION</scope>
    <scope>TISSUE SPECIFICITY</scope>
</reference>
<comment type="function">
    <text evidence="3 4 5">Essential for male and female fertility, playing a crucial role in regulating germ cell development by ensuring the proper progression of meiosis prophase I (PubMed:36001654, PubMed:36129965, PubMed:36726756). Regulates mitotic-to-meiotic transition in spermatogenesis by forming a complex with MEIOC and YTHDC2 which recognizes and down-regulates mitotic transcripts for a successful meiotic entry (PubMed:36129965). Required for normal synaptonemal complex formation during meiosis, binding meiotic cohesin subunit mRNAs containing GCCUAU/GUUCGA motifs in their 3'UTRs regions and positively regulating their translation (PubMed:36726756). Required for spermatogonial differentiation in both developing and adult testis (PubMed:36129965).</text>
</comment>
<comment type="subunit">
    <text evidence="3">Interacts with YTHDC2, MEIOC, MOV10, CNOT6L, DDX4, UPF1 and PABPC1.</text>
</comment>
<comment type="subcellular location">
    <subcellularLocation>
        <location evidence="3 4 5">Cytoplasm</location>
    </subcellularLocation>
</comment>
<comment type="tissue specificity">
    <text evidence="3 4 5">Expressed in the testis and ovary (at protein level) (PubMed:36001654, PubMed:36129965, PubMed:36726756). Expressed in spermatogonia and spermatocytes in testis (at protein level) (PubMed:36001654, PubMed:36129965).</text>
</comment>
<comment type="disruption phenotype">
    <text evidence="3 4 5">Male and female mice are infertile and show meiotic arrest in spermatocytes and oocytes (PubMed:36001654, PubMed:36129965, PubMed:36726756). Severely impaired spermatogenesis with a complete absence of postmeiotic germ cells and a marked decrease of spermatocytes in meiotic prophase I seen in adult testis (PubMed:36001654). Spermatogonial differentiation is impaired in developing testis (PubMed:36129965). RBM46-target cohesin subunits display unaltered mRNA levels but have reduced translation, resulting in the failed assembly of axial elements, synapsis disruption, and meiotic arrest (PubMed:36726756).</text>
</comment>
<protein>
    <recommendedName>
        <fullName>Probable RNA-binding protein 46</fullName>
    </recommendedName>
    <alternativeName>
        <fullName evidence="6">RNA-binding motif protein 46</fullName>
    </alternativeName>
</protein>
<dbReference type="EMBL" id="AC158935">
    <property type="status" value="NOT_ANNOTATED_CDS"/>
    <property type="molecule type" value="Genomic_DNA"/>
</dbReference>
<dbReference type="CCDS" id="CCDS50938.1"/>
<dbReference type="RefSeq" id="NP_001139800.1">
    <property type="nucleotide sequence ID" value="NM_001146328.3"/>
</dbReference>
<dbReference type="RefSeq" id="XP_006501913.1">
    <property type="nucleotide sequence ID" value="XM_006501850.4"/>
</dbReference>
<dbReference type="RefSeq" id="XP_006501914.1">
    <property type="nucleotide sequence ID" value="XM_006501851.3"/>
</dbReference>
<dbReference type="RefSeq" id="XP_011238490.1">
    <property type="nucleotide sequence ID" value="XM_011240188.3"/>
</dbReference>
<dbReference type="SMR" id="P86049"/>
<dbReference type="FunCoup" id="P86049">
    <property type="interactions" value="825"/>
</dbReference>
<dbReference type="STRING" id="10090.ENSMUSP00000045511"/>
<dbReference type="iPTMnet" id="P86049"/>
<dbReference type="PhosphoSitePlus" id="P86049"/>
<dbReference type="SwissPalm" id="P86049"/>
<dbReference type="jPOST" id="P86049"/>
<dbReference type="PaxDb" id="10090-ENSMUSP00000045511"/>
<dbReference type="PeptideAtlas" id="P86049"/>
<dbReference type="ProteomicsDB" id="255003"/>
<dbReference type="Antibodypedia" id="16839">
    <property type="antibodies" value="118 antibodies from 22 providers"/>
</dbReference>
<dbReference type="Ensembl" id="ENSMUST00000048647.14">
    <property type="protein sequence ID" value="ENSMUSP00000045511.7"/>
    <property type="gene ID" value="ENSMUSG00000033882.16"/>
</dbReference>
<dbReference type="GeneID" id="633285"/>
<dbReference type="KEGG" id="mmu:633285"/>
<dbReference type="AGR" id="MGI:3645057"/>
<dbReference type="CTD" id="166863"/>
<dbReference type="MGI" id="MGI:3645057">
    <property type="gene designation" value="Rbm46"/>
</dbReference>
<dbReference type="VEuPathDB" id="HostDB:ENSMUSG00000033882"/>
<dbReference type="eggNOG" id="KOG0117">
    <property type="taxonomic scope" value="Eukaryota"/>
</dbReference>
<dbReference type="GeneTree" id="ENSGT00940000155927"/>
<dbReference type="InParanoid" id="P86049"/>
<dbReference type="OMA" id="QSYFMPE"/>
<dbReference type="OrthoDB" id="3800936at2759"/>
<dbReference type="PhylomeDB" id="P86049"/>
<dbReference type="TreeFam" id="TF314932"/>
<dbReference type="BioGRID-ORCS" id="633285">
    <property type="hits" value="4 hits in 60 CRISPR screens"/>
</dbReference>
<dbReference type="PRO" id="PR:P86049"/>
<dbReference type="Proteomes" id="UP000000589">
    <property type="component" value="Chromosome 3"/>
</dbReference>
<dbReference type="RNAct" id="P86049">
    <property type="molecule type" value="protein"/>
</dbReference>
<dbReference type="Bgee" id="ENSMUSG00000033882">
    <property type="expression patterns" value="Expressed in spermatocyte and 111 other cell types or tissues"/>
</dbReference>
<dbReference type="ExpressionAtlas" id="P86049">
    <property type="expression patterns" value="baseline and differential"/>
</dbReference>
<dbReference type="GO" id="GO:0005737">
    <property type="term" value="C:cytoplasm"/>
    <property type="evidence" value="ECO:0000314"/>
    <property type="project" value="UniProtKB"/>
</dbReference>
<dbReference type="GO" id="GO:0005634">
    <property type="term" value="C:nucleus"/>
    <property type="evidence" value="ECO:0000314"/>
    <property type="project" value="MGI"/>
</dbReference>
<dbReference type="GO" id="GO:0003723">
    <property type="term" value="F:RNA binding"/>
    <property type="evidence" value="ECO:0000314"/>
    <property type="project" value="MGI"/>
</dbReference>
<dbReference type="GO" id="GO:0051728">
    <property type="term" value="P:cell cycle switching, mitotic to meiotic cell cycle"/>
    <property type="evidence" value="ECO:0000315"/>
    <property type="project" value="UniProtKB"/>
</dbReference>
<dbReference type="GO" id="GO:0007143">
    <property type="term" value="P:female meiotic nuclear division"/>
    <property type="evidence" value="ECO:0000315"/>
    <property type="project" value="UniProtKB"/>
</dbReference>
<dbReference type="GO" id="GO:0007140">
    <property type="term" value="P:male meiotic nuclear division"/>
    <property type="evidence" value="ECO:0000315"/>
    <property type="project" value="UniProtKB"/>
</dbReference>
<dbReference type="GO" id="GO:0048255">
    <property type="term" value="P:mRNA stabilization"/>
    <property type="evidence" value="ECO:0000314"/>
    <property type="project" value="MGI"/>
</dbReference>
<dbReference type="GO" id="GO:0048477">
    <property type="term" value="P:oogenesis"/>
    <property type="evidence" value="ECO:0000315"/>
    <property type="project" value="UniProtKB"/>
</dbReference>
<dbReference type="GO" id="GO:0048515">
    <property type="term" value="P:spermatid differentiation"/>
    <property type="evidence" value="ECO:0000315"/>
    <property type="project" value="UniProtKB"/>
</dbReference>
<dbReference type="GO" id="GO:0007283">
    <property type="term" value="P:spermatogenesis"/>
    <property type="evidence" value="ECO:0000315"/>
    <property type="project" value="UniProtKB"/>
</dbReference>
<dbReference type="GO" id="GO:0001829">
    <property type="term" value="P:trophectodermal cell differentiation"/>
    <property type="evidence" value="ECO:0000315"/>
    <property type="project" value="MGI"/>
</dbReference>
<dbReference type="CDD" id="cd19901">
    <property type="entry name" value="DSRM_RBM46"/>
    <property type="match status" value="1"/>
</dbReference>
<dbReference type="CDD" id="cd12484">
    <property type="entry name" value="RRM1_RBM46"/>
    <property type="match status" value="1"/>
</dbReference>
<dbReference type="CDD" id="cd12492">
    <property type="entry name" value="RRM2_RBM46"/>
    <property type="match status" value="1"/>
</dbReference>
<dbReference type="CDD" id="cd12496">
    <property type="entry name" value="RRM3_RBM46"/>
    <property type="match status" value="1"/>
</dbReference>
<dbReference type="FunFam" id="3.30.70.330:FF:000022">
    <property type="entry name" value="APOBEC1 complementation factor isoform X1"/>
    <property type="match status" value="1"/>
</dbReference>
<dbReference type="FunFam" id="3.30.70.330:FF:000026">
    <property type="entry name" value="APOBEC1 complementation factor isoform X1"/>
    <property type="match status" value="1"/>
</dbReference>
<dbReference type="FunFam" id="3.30.70.330:FF:000168">
    <property type="entry name" value="RNA binding motif protein 46"/>
    <property type="match status" value="1"/>
</dbReference>
<dbReference type="Gene3D" id="3.30.70.330">
    <property type="match status" value="3"/>
</dbReference>
<dbReference type="InterPro" id="IPR006535">
    <property type="entry name" value="HnRNP_R/Q_splicing_fac"/>
</dbReference>
<dbReference type="InterPro" id="IPR012677">
    <property type="entry name" value="Nucleotide-bd_a/b_plait_sf"/>
</dbReference>
<dbReference type="InterPro" id="IPR035979">
    <property type="entry name" value="RBD_domain_sf"/>
</dbReference>
<dbReference type="InterPro" id="IPR044462">
    <property type="entry name" value="RBM46_DSR"/>
</dbReference>
<dbReference type="InterPro" id="IPR034434">
    <property type="entry name" value="RBM46_RRM1"/>
</dbReference>
<dbReference type="InterPro" id="IPR034435">
    <property type="entry name" value="RBM46_RRM2"/>
</dbReference>
<dbReference type="InterPro" id="IPR047837">
    <property type="entry name" value="RBM46_RRM3"/>
</dbReference>
<dbReference type="InterPro" id="IPR000504">
    <property type="entry name" value="RRM_dom"/>
</dbReference>
<dbReference type="NCBIfam" id="TIGR01648">
    <property type="entry name" value="hnRNP-R-Q"/>
    <property type="match status" value="1"/>
</dbReference>
<dbReference type="PANTHER" id="PTHR21245">
    <property type="entry name" value="HETEROGENEOUS NUCLEAR RIBONUCLEOPROTEIN"/>
    <property type="match status" value="1"/>
</dbReference>
<dbReference type="Pfam" id="PF14709">
    <property type="entry name" value="DND1_DSRM"/>
    <property type="match status" value="1"/>
</dbReference>
<dbReference type="Pfam" id="PF00076">
    <property type="entry name" value="RRM_1"/>
    <property type="match status" value="3"/>
</dbReference>
<dbReference type="SMART" id="SM00360">
    <property type="entry name" value="RRM"/>
    <property type="match status" value="3"/>
</dbReference>
<dbReference type="SUPFAM" id="SSF54928">
    <property type="entry name" value="RNA-binding domain, RBD"/>
    <property type="match status" value="2"/>
</dbReference>
<dbReference type="PROSITE" id="PS50102">
    <property type="entry name" value="RRM"/>
    <property type="match status" value="3"/>
</dbReference>
<keyword id="KW-0963">Cytoplasm</keyword>
<keyword id="KW-0221">Differentiation</keyword>
<keyword id="KW-0469">Meiosis</keyword>
<keyword id="KW-0896">Oogenesis</keyword>
<keyword id="KW-1185">Reference proteome</keyword>
<keyword id="KW-0677">Repeat</keyword>
<keyword id="KW-0694">RNA-binding</keyword>
<keyword id="KW-0744">Spermatogenesis</keyword>
<gene>
    <name evidence="6" type="primary">Rbm46</name>
</gene>
<evidence type="ECO:0000255" key="1">
    <source>
        <dbReference type="PROSITE-ProRule" id="PRU00176"/>
    </source>
</evidence>
<evidence type="ECO:0000256" key="2">
    <source>
        <dbReference type="SAM" id="MobiDB-lite"/>
    </source>
</evidence>
<evidence type="ECO:0000269" key="3">
    <source>
    </source>
</evidence>
<evidence type="ECO:0000269" key="4">
    <source>
    </source>
</evidence>
<evidence type="ECO:0000269" key="5">
    <source>
    </source>
</evidence>
<evidence type="ECO:0000312" key="6">
    <source>
        <dbReference type="MGI" id="MGI:3645057"/>
    </source>
</evidence>
<name>RBM46_MOUSE</name>
<organism>
    <name type="scientific">Mus musculus</name>
    <name type="common">Mouse</name>
    <dbReference type="NCBI Taxonomy" id="10090"/>
    <lineage>
        <taxon>Eukaryota</taxon>
        <taxon>Metazoa</taxon>
        <taxon>Chordata</taxon>
        <taxon>Craniata</taxon>
        <taxon>Vertebrata</taxon>
        <taxon>Euteleostomi</taxon>
        <taxon>Mammalia</taxon>
        <taxon>Eutheria</taxon>
        <taxon>Euarchontoglires</taxon>
        <taxon>Glires</taxon>
        <taxon>Rodentia</taxon>
        <taxon>Myomorpha</taxon>
        <taxon>Muroidea</taxon>
        <taxon>Muridae</taxon>
        <taxon>Murinae</taxon>
        <taxon>Mus</taxon>
        <taxon>Mus</taxon>
    </lineage>
</organism>